<reference key="1">
    <citation type="journal article" date="2006" name="Proc. Natl. Acad. Sci. U.S.A.">
        <title>Molecular genetic anatomy of inter- and intraserotype variation in the human bacterial pathogen group A Streptococcus.</title>
        <authorList>
            <person name="Beres S.B."/>
            <person name="Richter E.W."/>
            <person name="Nagiec M.J."/>
            <person name="Sumby P."/>
            <person name="Porcella S.F."/>
            <person name="DeLeo F.R."/>
            <person name="Musser J.M."/>
        </authorList>
    </citation>
    <scope>NUCLEOTIDE SEQUENCE [LARGE SCALE GENOMIC DNA]</scope>
    <source>
        <strain>MGAS10270</strain>
    </source>
</reference>
<protein>
    <recommendedName>
        <fullName evidence="1">Uracil-DNA glycosylase</fullName>
        <shortName evidence="1">UDG</shortName>
        <ecNumber evidence="1">3.2.2.27</ecNumber>
    </recommendedName>
</protein>
<comment type="function">
    <text evidence="1">Excises uracil residues from the DNA which can arise as a result of misincorporation of dUMP residues by DNA polymerase or due to deamination of cytosine.</text>
</comment>
<comment type="catalytic activity">
    <reaction evidence="1">
        <text>Hydrolyzes single-stranded DNA or mismatched double-stranded DNA and polynucleotides, releasing free uracil.</text>
        <dbReference type="EC" id="3.2.2.27"/>
    </reaction>
</comment>
<comment type="subcellular location">
    <subcellularLocation>
        <location evidence="1">Cytoplasm</location>
    </subcellularLocation>
</comment>
<comment type="similarity">
    <text evidence="1">Belongs to the uracil-DNA glycosylase (UDG) superfamily. UNG family.</text>
</comment>
<feature type="chain" id="PRO_1000009952" description="Uracil-DNA glycosylase">
    <location>
        <begin position="1"/>
        <end position="217"/>
    </location>
</feature>
<feature type="active site" description="Proton acceptor" evidence="1">
    <location>
        <position position="62"/>
    </location>
</feature>
<evidence type="ECO:0000255" key="1">
    <source>
        <dbReference type="HAMAP-Rule" id="MF_00148"/>
    </source>
</evidence>
<keyword id="KW-0963">Cytoplasm</keyword>
<keyword id="KW-0227">DNA damage</keyword>
<keyword id="KW-0234">DNA repair</keyword>
<keyword id="KW-0378">Hydrolase</keyword>
<name>UNG_STRPD</name>
<organism>
    <name type="scientific">Streptococcus pyogenes serotype M2 (strain MGAS10270)</name>
    <dbReference type="NCBI Taxonomy" id="370552"/>
    <lineage>
        <taxon>Bacteria</taxon>
        <taxon>Bacillati</taxon>
        <taxon>Bacillota</taxon>
        <taxon>Bacilli</taxon>
        <taxon>Lactobacillales</taxon>
        <taxon>Streptococcaceae</taxon>
        <taxon>Streptococcus</taxon>
    </lineage>
</organism>
<sequence length="217" mass="24213">MAHSIWHEKIKSFLPEHYYGRINHFLDEAYASGLVYPPRENVFKALQVTPLEETKVLILGQDPYHGPKQAQGLSFSVPEEISAPPSLINILKELADDIGPRDHHDLSTWASQGVLLLNACLTVPAGQANGHAGLIWEPFTDAVIKVLNEKDSPVVFILWGAYARKKKAFITNPKHHIIESPHPSPLSSYRGFFGSKPFSRTNAILEKEGMTGVDWLK</sequence>
<accession>Q1JHA5</accession>
<gene>
    <name evidence="1" type="primary">ung</name>
    <name type="ordered locus">MGAS10270_Spy0766</name>
</gene>
<dbReference type="EC" id="3.2.2.27" evidence="1"/>
<dbReference type="EMBL" id="CP000260">
    <property type="protein sequence ID" value="ABF33831.1"/>
    <property type="molecule type" value="Genomic_DNA"/>
</dbReference>
<dbReference type="SMR" id="Q1JHA5"/>
<dbReference type="KEGG" id="sph:MGAS10270_Spy0766"/>
<dbReference type="HOGENOM" id="CLU_032162_3_1_9"/>
<dbReference type="Proteomes" id="UP000002436">
    <property type="component" value="Chromosome"/>
</dbReference>
<dbReference type="GO" id="GO:0005737">
    <property type="term" value="C:cytoplasm"/>
    <property type="evidence" value="ECO:0007669"/>
    <property type="project" value="UniProtKB-SubCell"/>
</dbReference>
<dbReference type="GO" id="GO:0004844">
    <property type="term" value="F:uracil DNA N-glycosylase activity"/>
    <property type="evidence" value="ECO:0007669"/>
    <property type="project" value="UniProtKB-UniRule"/>
</dbReference>
<dbReference type="GO" id="GO:0097510">
    <property type="term" value="P:base-excision repair, AP site formation via deaminated base removal"/>
    <property type="evidence" value="ECO:0007669"/>
    <property type="project" value="TreeGrafter"/>
</dbReference>
<dbReference type="CDD" id="cd10027">
    <property type="entry name" value="UDG-F1-like"/>
    <property type="match status" value="1"/>
</dbReference>
<dbReference type="FunFam" id="3.40.470.10:FF:000008">
    <property type="entry name" value="Uracil-DNA glycosylase"/>
    <property type="match status" value="1"/>
</dbReference>
<dbReference type="Gene3D" id="3.40.470.10">
    <property type="entry name" value="Uracil-DNA glycosylase-like domain"/>
    <property type="match status" value="1"/>
</dbReference>
<dbReference type="HAMAP" id="MF_00148">
    <property type="entry name" value="UDG"/>
    <property type="match status" value="1"/>
</dbReference>
<dbReference type="InterPro" id="IPR002043">
    <property type="entry name" value="UDG_fam1"/>
</dbReference>
<dbReference type="InterPro" id="IPR018085">
    <property type="entry name" value="Ura-DNA_Glyclase_AS"/>
</dbReference>
<dbReference type="InterPro" id="IPR005122">
    <property type="entry name" value="Uracil-DNA_glycosylase-like"/>
</dbReference>
<dbReference type="InterPro" id="IPR036895">
    <property type="entry name" value="Uracil-DNA_glycosylase-like_sf"/>
</dbReference>
<dbReference type="NCBIfam" id="NF003588">
    <property type="entry name" value="PRK05254.1-1"/>
    <property type="match status" value="1"/>
</dbReference>
<dbReference type="NCBIfam" id="NF003589">
    <property type="entry name" value="PRK05254.1-2"/>
    <property type="match status" value="1"/>
</dbReference>
<dbReference type="NCBIfam" id="NF003592">
    <property type="entry name" value="PRK05254.1-5"/>
    <property type="match status" value="1"/>
</dbReference>
<dbReference type="NCBIfam" id="TIGR00628">
    <property type="entry name" value="ung"/>
    <property type="match status" value="1"/>
</dbReference>
<dbReference type="PANTHER" id="PTHR11264">
    <property type="entry name" value="URACIL-DNA GLYCOSYLASE"/>
    <property type="match status" value="1"/>
</dbReference>
<dbReference type="PANTHER" id="PTHR11264:SF0">
    <property type="entry name" value="URACIL-DNA GLYCOSYLASE"/>
    <property type="match status" value="1"/>
</dbReference>
<dbReference type="Pfam" id="PF03167">
    <property type="entry name" value="UDG"/>
    <property type="match status" value="1"/>
</dbReference>
<dbReference type="SMART" id="SM00986">
    <property type="entry name" value="UDG"/>
    <property type="match status" value="1"/>
</dbReference>
<dbReference type="SMART" id="SM00987">
    <property type="entry name" value="UreE_C"/>
    <property type="match status" value="1"/>
</dbReference>
<dbReference type="SUPFAM" id="SSF52141">
    <property type="entry name" value="Uracil-DNA glycosylase-like"/>
    <property type="match status" value="1"/>
</dbReference>
<dbReference type="PROSITE" id="PS00130">
    <property type="entry name" value="U_DNA_GLYCOSYLASE"/>
    <property type="match status" value="1"/>
</dbReference>
<proteinExistence type="inferred from homology"/>